<proteinExistence type="inferred from homology"/>
<accession>A7ZFY7</accession>
<sequence length="338" mass="37733">MRKITTSAYMPTEIEVKSVSENVANITAYPFEAGYAVTLAHPLRRLLYTSTVGFAPIGVKIKGVSHEFDSMRGMLEDVAFFIINLKKIRFKLKSGSEREVIEYSFKGPKEITGADLNNDLVEIVNPDAYLATINEDAELNFSVIIQKGIGYVPSEEIREEIEDEYIALDAFFTPVKKAVYEIQNVLVEDDPDYEKIVFTITTDGQVGPVEAFKNCLEAMYQQMSVFKGILDIDVSAPVASSSASGEFSKLLSSVEDLNLSARSFNCLDKAEIRFIGELALMDENELKELKNLGKKSLEEIKAVMEEIGYPVGVDVLKDSKEQLRKKITELKSQMSAKE</sequence>
<gene>
    <name evidence="1" type="primary">rpoA</name>
    <name type="ordered locus">Ccon26_18600</name>
    <name type="ORF">CCC13826_1751</name>
</gene>
<name>RPOA_CAMC1</name>
<reference key="1">
    <citation type="submission" date="2007-10" db="EMBL/GenBank/DDBJ databases">
        <title>Genome sequence of Campylobacter concisus 13826 isolated from human feces.</title>
        <authorList>
            <person name="Fouts D.E."/>
            <person name="Mongodin E.F."/>
            <person name="Puiu D."/>
            <person name="Sebastian Y."/>
            <person name="Miller W.G."/>
            <person name="Mandrell R.E."/>
            <person name="On S."/>
            <person name="Nelson K.E."/>
        </authorList>
    </citation>
    <scope>NUCLEOTIDE SEQUENCE [LARGE SCALE GENOMIC DNA]</scope>
    <source>
        <strain>13826</strain>
    </source>
</reference>
<dbReference type="EC" id="2.7.7.6" evidence="1"/>
<dbReference type="EMBL" id="CP000792">
    <property type="protein sequence ID" value="EAT98163.1"/>
    <property type="molecule type" value="Genomic_DNA"/>
</dbReference>
<dbReference type="RefSeq" id="WP_012140555.1">
    <property type="nucleotide sequence ID" value="NC_009802.2"/>
</dbReference>
<dbReference type="SMR" id="A7ZFY7"/>
<dbReference type="STRING" id="360104.CCC13826_1751"/>
<dbReference type="KEGG" id="cco:CCC13826_1751"/>
<dbReference type="eggNOG" id="COG0202">
    <property type="taxonomic scope" value="Bacteria"/>
</dbReference>
<dbReference type="HOGENOM" id="CLU_053084_0_1_7"/>
<dbReference type="OrthoDB" id="9805706at2"/>
<dbReference type="Proteomes" id="UP000001121">
    <property type="component" value="Chromosome"/>
</dbReference>
<dbReference type="GO" id="GO:0005737">
    <property type="term" value="C:cytoplasm"/>
    <property type="evidence" value="ECO:0007669"/>
    <property type="project" value="UniProtKB-ARBA"/>
</dbReference>
<dbReference type="GO" id="GO:0000428">
    <property type="term" value="C:DNA-directed RNA polymerase complex"/>
    <property type="evidence" value="ECO:0007669"/>
    <property type="project" value="UniProtKB-KW"/>
</dbReference>
<dbReference type="GO" id="GO:0003677">
    <property type="term" value="F:DNA binding"/>
    <property type="evidence" value="ECO:0007669"/>
    <property type="project" value="UniProtKB-UniRule"/>
</dbReference>
<dbReference type="GO" id="GO:0003899">
    <property type="term" value="F:DNA-directed RNA polymerase activity"/>
    <property type="evidence" value="ECO:0007669"/>
    <property type="project" value="UniProtKB-UniRule"/>
</dbReference>
<dbReference type="GO" id="GO:0046983">
    <property type="term" value="F:protein dimerization activity"/>
    <property type="evidence" value="ECO:0007669"/>
    <property type="project" value="InterPro"/>
</dbReference>
<dbReference type="GO" id="GO:0006351">
    <property type="term" value="P:DNA-templated transcription"/>
    <property type="evidence" value="ECO:0007669"/>
    <property type="project" value="UniProtKB-UniRule"/>
</dbReference>
<dbReference type="CDD" id="cd06928">
    <property type="entry name" value="RNAP_alpha_NTD"/>
    <property type="match status" value="1"/>
</dbReference>
<dbReference type="Gene3D" id="1.10.150.20">
    <property type="entry name" value="5' to 3' exonuclease, C-terminal subdomain"/>
    <property type="match status" value="1"/>
</dbReference>
<dbReference type="Gene3D" id="2.170.120.12">
    <property type="entry name" value="DNA-directed RNA polymerase, insert domain"/>
    <property type="match status" value="1"/>
</dbReference>
<dbReference type="Gene3D" id="3.30.1360.10">
    <property type="entry name" value="RNA polymerase, RBP11-like subunit"/>
    <property type="match status" value="1"/>
</dbReference>
<dbReference type="HAMAP" id="MF_00059">
    <property type="entry name" value="RNApol_bact_RpoA"/>
    <property type="match status" value="1"/>
</dbReference>
<dbReference type="InterPro" id="IPR011262">
    <property type="entry name" value="DNA-dir_RNA_pol_insert"/>
</dbReference>
<dbReference type="InterPro" id="IPR011263">
    <property type="entry name" value="DNA-dir_RNA_pol_RpoA/D/Rpb3"/>
</dbReference>
<dbReference type="InterPro" id="IPR011773">
    <property type="entry name" value="DNA-dir_RpoA"/>
</dbReference>
<dbReference type="InterPro" id="IPR036603">
    <property type="entry name" value="RBP11-like"/>
</dbReference>
<dbReference type="InterPro" id="IPR011260">
    <property type="entry name" value="RNAP_asu_C"/>
</dbReference>
<dbReference type="InterPro" id="IPR036643">
    <property type="entry name" value="RNApol_insert_sf"/>
</dbReference>
<dbReference type="NCBIfam" id="NF003517">
    <property type="entry name" value="PRK05182.2-3"/>
    <property type="match status" value="1"/>
</dbReference>
<dbReference type="NCBIfam" id="NF003519">
    <property type="entry name" value="PRK05182.2-5"/>
    <property type="match status" value="1"/>
</dbReference>
<dbReference type="NCBIfam" id="TIGR02027">
    <property type="entry name" value="rpoA"/>
    <property type="match status" value="1"/>
</dbReference>
<dbReference type="Pfam" id="PF01000">
    <property type="entry name" value="RNA_pol_A_bac"/>
    <property type="match status" value="1"/>
</dbReference>
<dbReference type="Pfam" id="PF03118">
    <property type="entry name" value="RNA_pol_A_CTD"/>
    <property type="match status" value="1"/>
</dbReference>
<dbReference type="Pfam" id="PF01193">
    <property type="entry name" value="RNA_pol_L"/>
    <property type="match status" value="1"/>
</dbReference>
<dbReference type="SMART" id="SM00662">
    <property type="entry name" value="RPOLD"/>
    <property type="match status" value="1"/>
</dbReference>
<dbReference type="SUPFAM" id="SSF47789">
    <property type="entry name" value="C-terminal domain of RNA polymerase alpha subunit"/>
    <property type="match status" value="1"/>
</dbReference>
<dbReference type="SUPFAM" id="SSF56553">
    <property type="entry name" value="Insert subdomain of RNA polymerase alpha subunit"/>
    <property type="match status" value="1"/>
</dbReference>
<dbReference type="SUPFAM" id="SSF55257">
    <property type="entry name" value="RBP11-like subunits of RNA polymerase"/>
    <property type="match status" value="1"/>
</dbReference>
<organism>
    <name type="scientific">Campylobacter concisus (strain 13826)</name>
    <dbReference type="NCBI Taxonomy" id="360104"/>
    <lineage>
        <taxon>Bacteria</taxon>
        <taxon>Pseudomonadati</taxon>
        <taxon>Campylobacterota</taxon>
        <taxon>Epsilonproteobacteria</taxon>
        <taxon>Campylobacterales</taxon>
        <taxon>Campylobacteraceae</taxon>
        <taxon>Campylobacter</taxon>
    </lineage>
</organism>
<evidence type="ECO:0000255" key="1">
    <source>
        <dbReference type="HAMAP-Rule" id="MF_00059"/>
    </source>
</evidence>
<comment type="function">
    <text evidence="1">DNA-dependent RNA polymerase catalyzes the transcription of DNA into RNA using the four ribonucleoside triphosphates as substrates.</text>
</comment>
<comment type="catalytic activity">
    <reaction evidence="1">
        <text>RNA(n) + a ribonucleoside 5'-triphosphate = RNA(n+1) + diphosphate</text>
        <dbReference type="Rhea" id="RHEA:21248"/>
        <dbReference type="Rhea" id="RHEA-COMP:14527"/>
        <dbReference type="Rhea" id="RHEA-COMP:17342"/>
        <dbReference type="ChEBI" id="CHEBI:33019"/>
        <dbReference type="ChEBI" id="CHEBI:61557"/>
        <dbReference type="ChEBI" id="CHEBI:140395"/>
        <dbReference type="EC" id="2.7.7.6"/>
    </reaction>
</comment>
<comment type="subunit">
    <text evidence="1">Homodimer. The RNAP catalytic core consists of 2 alpha, 1 beta, 1 beta' and 1 omega subunit. When a sigma factor is associated with the core the holoenzyme is formed, which can initiate transcription.</text>
</comment>
<comment type="domain">
    <text evidence="1">The N-terminal domain is essential for RNAP assembly and basal transcription, whereas the C-terminal domain is involved in interaction with transcriptional regulators and with upstream promoter elements.</text>
</comment>
<comment type="similarity">
    <text evidence="1">Belongs to the RNA polymerase alpha chain family.</text>
</comment>
<keyword id="KW-0240">DNA-directed RNA polymerase</keyword>
<keyword id="KW-0548">Nucleotidyltransferase</keyword>
<keyword id="KW-0804">Transcription</keyword>
<keyword id="KW-0808">Transferase</keyword>
<feature type="chain" id="PRO_0000323622" description="DNA-directed RNA polymerase subunit alpha">
    <location>
        <begin position="1"/>
        <end position="338"/>
    </location>
</feature>
<feature type="region of interest" description="Alpha N-terminal domain (alpha-NTD)" evidence="1">
    <location>
        <begin position="1"/>
        <end position="230"/>
    </location>
</feature>
<feature type="region of interest" description="Alpha C-terminal domain (alpha-CTD)" evidence="1">
    <location>
        <begin position="247"/>
        <end position="338"/>
    </location>
</feature>
<protein>
    <recommendedName>
        <fullName evidence="1">DNA-directed RNA polymerase subunit alpha</fullName>
        <shortName evidence="1">RNAP subunit alpha</shortName>
        <ecNumber evidence="1">2.7.7.6</ecNumber>
    </recommendedName>
    <alternativeName>
        <fullName evidence="1">RNA polymerase subunit alpha</fullName>
    </alternativeName>
    <alternativeName>
        <fullName evidence="1">Transcriptase subunit alpha</fullName>
    </alternativeName>
</protein>